<dbReference type="EMBL" id="BX548174">
    <property type="protein sequence ID" value="CAE20006.1"/>
    <property type="molecule type" value="Genomic_DNA"/>
</dbReference>
<dbReference type="RefSeq" id="WP_011133175.1">
    <property type="nucleotide sequence ID" value="NC_005072.1"/>
</dbReference>
<dbReference type="SMR" id="Q7UZV5"/>
<dbReference type="STRING" id="59919.PMM1547"/>
<dbReference type="KEGG" id="pmm:PMM1547"/>
<dbReference type="eggNOG" id="COG0198">
    <property type="taxonomic scope" value="Bacteria"/>
</dbReference>
<dbReference type="HOGENOM" id="CLU_093315_2_3_3"/>
<dbReference type="OrthoDB" id="9807419at2"/>
<dbReference type="Proteomes" id="UP000001026">
    <property type="component" value="Chromosome"/>
</dbReference>
<dbReference type="GO" id="GO:1990904">
    <property type="term" value="C:ribonucleoprotein complex"/>
    <property type="evidence" value="ECO:0007669"/>
    <property type="project" value="UniProtKB-KW"/>
</dbReference>
<dbReference type="GO" id="GO:0005840">
    <property type="term" value="C:ribosome"/>
    <property type="evidence" value="ECO:0007669"/>
    <property type="project" value="UniProtKB-KW"/>
</dbReference>
<dbReference type="GO" id="GO:0019843">
    <property type="term" value="F:rRNA binding"/>
    <property type="evidence" value="ECO:0007669"/>
    <property type="project" value="UniProtKB-UniRule"/>
</dbReference>
<dbReference type="GO" id="GO:0003735">
    <property type="term" value="F:structural constituent of ribosome"/>
    <property type="evidence" value="ECO:0007669"/>
    <property type="project" value="InterPro"/>
</dbReference>
<dbReference type="GO" id="GO:0006412">
    <property type="term" value="P:translation"/>
    <property type="evidence" value="ECO:0007669"/>
    <property type="project" value="UniProtKB-UniRule"/>
</dbReference>
<dbReference type="CDD" id="cd06089">
    <property type="entry name" value="KOW_RPL26"/>
    <property type="match status" value="1"/>
</dbReference>
<dbReference type="Gene3D" id="2.30.30.30">
    <property type="match status" value="1"/>
</dbReference>
<dbReference type="HAMAP" id="MF_01326_B">
    <property type="entry name" value="Ribosomal_uL24_B"/>
    <property type="match status" value="1"/>
</dbReference>
<dbReference type="InterPro" id="IPR005824">
    <property type="entry name" value="KOW"/>
</dbReference>
<dbReference type="InterPro" id="IPR014722">
    <property type="entry name" value="Rib_uL2_dom2"/>
</dbReference>
<dbReference type="InterPro" id="IPR003256">
    <property type="entry name" value="Ribosomal_uL24"/>
</dbReference>
<dbReference type="InterPro" id="IPR005825">
    <property type="entry name" value="Ribosomal_uL24_CS"/>
</dbReference>
<dbReference type="InterPro" id="IPR041988">
    <property type="entry name" value="Ribosomal_uL24_KOW"/>
</dbReference>
<dbReference type="InterPro" id="IPR008991">
    <property type="entry name" value="Translation_prot_SH3-like_sf"/>
</dbReference>
<dbReference type="NCBIfam" id="TIGR01079">
    <property type="entry name" value="rplX_bact"/>
    <property type="match status" value="1"/>
</dbReference>
<dbReference type="PANTHER" id="PTHR12903">
    <property type="entry name" value="MITOCHONDRIAL RIBOSOMAL PROTEIN L24"/>
    <property type="match status" value="1"/>
</dbReference>
<dbReference type="Pfam" id="PF00467">
    <property type="entry name" value="KOW"/>
    <property type="match status" value="1"/>
</dbReference>
<dbReference type="Pfam" id="PF17136">
    <property type="entry name" value="ribosomal_L24"/>
    <property type="match status" value="1"/>
</dbReference>
<dbReference type="SMART" id="SM00739">
    <property type="entry name" value="KOW"/>
    <property type="match status" value="1"/>
</dbReference>
<dbReference type="SUPFAM" id="SSF50104">
    <property type="entry name" value="Translation proteins SH3-like domain"/>
    <property type="match status" value="1"/>
</dbReference>
<dbReference type="PROSITE" id="PS01108">
    <property type="entry name" value="RIBOSOMAL_L24"/>
    <property type="match status" value="1"/>
</dbReference>
<protein>
    <recommendedName>
        <fullName evidence="1">Large ribosomal subunit protein uL24</fullName>
    </recommendedName>
    <alternativeName>
        <fullName evidence="2">50S ribosomal protein L24</fullName>
    </alternativeName>
</protein>
<reference key="1">
    <citation type="journal article" date="2003" name="Nature">
        <title>Genome divergence in two Prochlorococcus ecotypes reflects oceanic niche differentiation.</title>
        <authorList>
            <person name="Rocap G."/>
            <person name="Larimer F.W."/>
            <person name="Lamerdin J.E."/>
            <person name="Malfatti S."/>
            <person name="Chain P."/>
            <person name="Ahlgren N.A."/>
            <person name="Arellano A."/>
            <person name="Coleman M."/>
            <person name="Hauser L."/>
            <person name="Hess W.R."/>
            <person name="Johnson Z.I."/>
            <person name="Land M.L."/>
            <person name="Lindell D."/>
            <person name="Post A.F."/>
            <person name="Regala W."/>
            <person name="Shah M."/>
            <person name="Shaw S.L."/>
            <person name="Steglich C."/>
            <person name="Sullivan M.B."/>
            <person name="Ting C.S."/>
            <person name="Tolonen A."/>
            <person name="Webb E.A."/>
            <person name="Zinser E.R."/>
            <person name="Chisholm S.W."/>
        </authorList>
    </citation>
    <scope>NUCLEOTIDE SEQUENCE [LARGE SCALE GENOMIC DNA]</scope>
    <source>
        <strain>CCMP1986 / NIES-2087 / MED4</strain>
    </source>
</reference>
<proteinExistence type="inferred from homology"/>
<feature type="chain" id="PRO_0000130695" description="Large ribosomal subunit protein uL24">
    <location>
        <begin position="1"/>
        <end position="118"/>
    </location>
</feature>
<keyword id="KW-0687">Ribonucleoprotein</keyword>
<keyword id="KW-0689">Ribosomal protein</keyword>
<keyword id="KW-0694">RNA-binding</keyword>
<keyword id="KW-0699">rRNA-binding</keyword>
<comment type="function">
    <text evidence="1">One of two assembly initiator proteins, it binds directly to the 5'-end of the 23S rRNA, where it nucleates assembly of the 50S subunit.</text>
</comment>
<comment type="function">
    <text evidence="1">One of the proteins that surrounds the polypeptide exit tunnel on the outside of the subunit.</text>
</comment>
<comment type="subunit">
    <text evidence="1">Part of the 50S ribosomal subunit.</text>
</comment>
<comment type="similarity">
    <text evidence="1">Belongs to the universal ribosomal protein uL24 family.</text>
</comment>
<organism>
    <name type="scientific">Prochlorococcus marinus subsp. pastoris (strain CCMP1986 / NIES-2087 / MED4)</name>
    <dbReference type="NCBI Taxonomy" id="59919"/>
    <lineage>
        <taxon>Bacteria</taxon>
        <taxon>Bacillati</taxon>
        <taxon>Cyanobacteriota</taxon>
        <taxon>Cyanophyceae</taxon>
        <taxon>Synechococcales</taxon>
        <taxon>Prochlorococcaceae</taxon>
        <taxon>Prochlorococcus</taxon>
    </lineage>
</organism>
<evidence type="ECO:0000255" key="1">
    <source>
        <dbReference type="HAMAP-Rule" id="MF_01326"/>
    </source>
</evidence>
<evidence type="ECO:0000305" key="2"/>
<sequence length="118" mass="13479">MLDSLKQKKNFKRIKMRIKTGDLVKVINGKEKGKTGEVLKTIPLENRVVVKGVNLRTKHVKPSQEGESGRILTEEASLHASNVMFFSKDKNLISKIEYFIDKEGVKKRRLKKTGELID</sequence>
<accession>Q7UZV5</accession>
<gene>
    <name evidence="1" type="primary">rplX</name>
    <name evidence="1" type="synonym">rpl24</name>
    <name type="ordered locus">PMM1547</name>
</gene>
<name>RL24_PROMP</name>